<gene>
    <name type="primary">SWA2</name>
    <name type="synonym">AUX1</name>
    <name type="synonym">BUD24</name>
    <name type="ordered locus">YDR320C</name>
    <name type="ORF">D9798.10</name>
</gene>
<name>SWA2_YEAST</name>
<keyword id="KW-0002">3D-structure</keyword>
<keyword id="KW-0963">Cytoplasm</keyword>
<keyword id="KW-0256">Endoplasmic reticulum</keyword>
<keyword id="KW-0472">Membrane</keyword>
<keyword id="KW-0597">Phosphoprotein</keyword>
<keyword id="KW-1185">Reference proteome</keyword>
<keyword id="KW-0677">Repeat</keyword>
<keyword id="KW-0802">TPR repeat</keyword>
<feature type="chain" id="PRO_0000270621" description="Auxilin-like clathrin uncoating factor SWA2">
    <location>
        <begin position="1"/>
        <end position="668"/>
    </location>
</feature>
<feature type="domain" description="UBA">
    <location>
        <begin position="140"/>
        <end position="180"/>
    </location>
</feature>
<feature type="repeat" description="TPR 1">
    <location>
        <begin position="374"/>
        <end position="407"/>
    </location>
</feature>
<feature type="repeat" description="TPR 2">
    <location>
        <begin position="412"/>
        <end position="445"/>
    </location>
</feature>
<feature type="repeat" description="TPR 3">
    <location>
        <begin position="467"/>
        <end position="500"/>
    </location>
</feature>
<feature type="domain" description="J">
    <location>
        <begin position="603"/>
        <end position="668"/>
    </location>
</feature>
<feature type="region of interest" description="CB1">
    <location>
        <begin position="1"/>
        <end position="100"/>
    </location>
</feature>
<feature type="region of interest" description="Disordered" evidence="1">
    <location>
        <begin position="1"/>
        <end position="95"/>
    </location>
</feature>
<feature type="region of interest" description="CB2">
    <location>
        <begin position="238"/>
        <end position="302"/>
    </location>
</feature>
<feature type="region of interest" description="Disordered" evidence="1">
    <location>
        <begin position="302"/>
        <end position="323"/>
    </location>
</feature>
<feature type="region of interest" description="CB3">
    <location>
        <begin position="303"/>
        <end position="362"/>
    </location>
</feature>
<feature type="region of interest" description="Disordered" evidence="1">
    <location>
        <begin position="339"/>
        <end position="359"/>
    </location>
</feature>
<feature type="region of interest" description="Disordered" evidence="1">
    <location>
        <begin position="511"/>
        <end position="556"/>
    </location>
</feature>
<feature type="compositionally biased region" description="Polar residues" evidence="1">
    <location>
        <begin position="17"/>
        <end position="36"/>
    </location>
</feature>
<feature type="compositionally biased region" description="Low complexity" evidence="1">
    <location>
        <begin position="76"/>
        <end position="92"/>
    </location>
</feature>
<feature type="compositionally biased region" description="Polar residues" evidence="1">
    <location>
        <begin position="340"/>
        <end position="359"/>
    </location>
</feature>
<feature type="compositionally biased region" description="Polar residues" evidence="1">
    <location>
        <begin position="539"/>
        <end position="555"/>
    </location>
</feature>
<feature type="modified residue" description="Phosphoserine" evidence="10">
    <location>
        <position position="52"/>
    </location>
</feature>
<feature type="modified residue" description="Phosphoserine" evidence="8 9 10">
    <location>
        <position position="64"/>
    </location>
</feature>
<feature type="modified residue" description="Phosphoserine" evidence="8 9 10">
    <location>
        <position position="264"/>
    </location>
</feature>
<feature type="modified residue" description="Phosphoserine" evidence="8">
    <location>
        <position position="308"/>
    </location>
</feature>
<feature type="modified residue" description="Phosphoserine" evidence="8">
    <location>
        <position position="312"/>
    </location>
</feature>
<feature type="mutagenesis site" description="In SWA2-1/SWA2-TPR; partial loss of clathrin disassembly function. In SWA2-TPR-J; complete loss of clathrin disassembly function; when associated with 631-AAA-633." evidence="2 7">
    <original>G</original>
    <variation>R</variation>
    <location>
        <position position="388"/>
    </location>
</feature>
<feature type="mutagenesis site" description="In SWA2-J; abolishes ATPase stimulation activity. In SWA2-TPR-J; complete loss of clathrin disassembly function; when associated with R-388." evidence="7">
    <original>HPD</original>
    <variation>AAA</variation>
    <location>
        <begin position="631"/>
        <end position="633"/>
    </location>
</feature>
<feature type="helix" evidence="11">
    <location>
        <begin position="140"/>
        <end position="153"/>
    </location>
</feature>
<feature type="helix" evidence="11">
    <location>
        <begin position="158"/>
        <end position="167"/>
    </location>
</feature>
<feature type="helix" evidence="11">
    <location>
        <begin position="171"/>
        <end position="179"/>
    </location>
</feature>
<sequence length="668" mass="75020">MSDPFAHLLTSLKNKDSASASKETTPQSSNSPSITGSAVADVARTDKSPNDSLHSISAPPLIPSPKVDFSAPPLVPTNSTTKSNTANNTPPSALANTDDDFNQLFGMGTVTTTDTIQKPDEDYYGSKEDHLYNGDDALVDEVKDMEIARLMSLGLSIEEATEFYENDVTYERYLEILKSKQKERNDLAIRKKESGIKMEKSGLSNIVGTDSNNLFSMATDFFNKGKKLVDQWTSFPPEANDRLNNYSKTHDKVEDYDLPQVNDSPNRILFEDNEVVENLPPADNPDQDLLTDFETKIDITKRTAPDVSHSSSPTSGILIEENSRRNEPLIEDSLLDFSEGNLTNSKSNEDSTLFNENSNTDSTIPISDIELSGYNEFKAKGTSLFKNGDYINSLQEYEKSLNTLPLNHPLRIIALSNIIASQLKIGEYSKSIENSSMALELFPSSKAKWKNKISNSDPERSFNDIWPKIMIRRAESFEHLESFKKALETYQELIKKNFFDDKIMQGKRRCQDFINPPPVKKSMPVKKKTTTTSPATKKQNLTASSSNSPISVDSTSEIKKRELENAKLALYDKVFEKISSWKDGKDDDIRHLLANLSSLLTWCNWKDVSMQDLVMPKRVKITYMKAVAKTHPDKIPESLSLENKMIAENIFSTLSIAWDKFKLQNDIN</sequence>
<dbReference type="EMBL" id="U32517">
    <property type="protein sequence ID" value="AAB64756.1"/>
    <property type="molecule type" value="Genomic_DNA"/>
</dbReference>
<dbReference type="EMBL" id="BK006938">
    <property type="protein sequence ID" value="DAA12161.1"/>
    <property type="molecule type" value="Genomic_DNA"/>
</dbReference>
<dbReference type="PIR" id="S59786">
    <property type="entry name" value="S59786"/>
</dbReference>
<dbReference type="RefSeq" id="NP_010606.1">
    <property type="nucleotide sequence ID" value="NM_001180628.1"/>
</dbReference>
<dbReference type="PDB" id="1PGY">
    <property type="method" value="NMR"/>
    <property type="chains" value="A=137-183"/>
</dbReference>
<dbReference type="PDBsum" id="1PGY"/>
<dbReference type="BMRB" id="Q06677"/>
<dbReference type="SMR" id="Q06677"/>
<dbReference type="BioGRID" id="32376">
    <property type="interactions" value="390"/>
</dbReference>
<dbReference type="DIP" id="DIP-2847N"/>
<dbReference type="FunCoup" id="Q06677">
    <property type="interactions" value="90"/>
</dbReference>
<dbReference type="IntAct" id="Q06677">
    <property type="interactions" value="8"/>
</dbReference>
<dbReference type="MINT" id="Q06677"/>
<dbReference type="STRING" id="4932.YDR320C"/>
<dbReference type="iPTMnet" id="Q06677"/>
<dbReference type="PaxDb" id="4932-YDR320C"/>
<dbReference type="PeptideAtlas" id="Q06677"/>
<dbReference type="EnsemblFungi" id="YDR320C_mRNA">
    <property type="protein sequence ID" value="YDR320C"/>
    <property type="gene ID" value="YDR320C"/>
</dbReference>
<dbReference type="GeneID" id="851918"/>
<dbReference type="KEGG" id="sce:YDR320C"/>
<dbReference type="AGR" id="SGD:S000002728"/>
<dbReference type="SGD" id="S000002728">
    <property type="gene designation" value="SWA2"/>
</dbReference>
<dbReference type="VEuPathDB" id="FungiDB:YDR320C"/>
<dbReference type="eggNOG" id="KOG0431">
    <property type="taxonomic scope" value="Eukaryota"/>
</dbReference>
<dbReference type="eggNOG" id="KOG1124">
    <property type="taxonomic scope" value="Eukaryota"/>
</dbReference>
<dbReference type="GeneTree" id="ENSGT00940000167056"/>
<dbReference type="HOGENOM" id="CLU_005723_2_0_1"/>
<dbReference type="InParanoid" id="Q06677"/>
<dbReference type="OMA" id="MEIARLM"/>
<dbReference type="OrthoDB" id="1717591at2759"/>
<dbReference type="BioCyc" id="YEAST:G3O-29878-MONOMER"/>
<dbReference type="BioGRID-ORCS" id="851918">
    <property type="hits" value="0 hits in 10 CRISPR screens"/>
</dbReference>
<dbReference type="EvolutionaryTrace" id="Q06677"/>
<dbReference type="PRO" id="PR:Q06677"/>
<dbReference type="Proteomes" id="UP000002311">
    <property type="component" value="Chromosome IV"/>
</dbReference>
<dbReference type="RNAct" id="Q06677">
    <property type="molecule type" value="protein"/>
</dbReference>
<dbReference type="GO" id="GO:0005829">
    <property type="term" value="C:cytosol"/>
    <property type="evidence" value="ECO:0007005"/>
    <property type="project" value="SGD"/>
</dbReference>
<dbReference type="GO" id="GO:0005789">
    <property type="term" value="C:endoplasmic reticulum membrane"/>
    <property type="evidence" value="ECO:0000314"/>
    <property type="project" value="SGD"/>
</dbReference>
<dbReference type="GO" id="GO:0043231">
    <property type="term" value="C:intracellular membrane-bounded organelle"/>
    <property type="evidence" value="ECO:0000318"/>
    <property type="project" value="GO_Central"/>
</dbReference>
<dbReference type="GO" id="GO:0031982">
    <property type="term" value="C:vesicle"/>
    <property type="evidence" value="ECO:0000318"/>
    <property type="project" value="GO_Central"/>
</dbReference>
<dbReference type="GO" id="GO:0030276">
    <property type="term" value="F:clathrin binding"/>
    <property type="evidence" value="ECO:0000314"/>
    <property type="project" value="SGD"/>
</dbReference>
<dbReference type="GO" id="GO:0043130">
    <property type="term" value="F:ubiquitin binding"/>
    <property type="evidence" value="ECO:0000314"/>
    <property type="project" value="SGD"/>
</dbReference>
<dbReference type="GO" id="GO:0072318">
    <property type="term" value="P:clathrin coat disassembly"/>
    <property type="evidence" value="ECO:0000314"/>
    <property type="project" value="SGD"/>
</dbReference>
<dbReference type="GO" id="GO:0072583">
    <property type="term" value="P:clathrin-dependent endocytosis"/>
    <property type="evidence" value="ECO:0000318"/>
    <property type="project" value="GO_Central"/>
</dbReference>
<dbReference type="GO" id="GO:0048309">
    <property type="term" value="P:endoplasmic reticulum inheritance"/>
    <property type="evidence" value="ECO:0000315"/>
    <property type="project" value="SGD"/>
</dbReference>
<dbReference type="CDD" id="cd14329">
    <property type="entry name" value="UBA_SWA2p_like"/>
    <property type="match status" value="1"/>
</dbReference>
<dbReference type="Gene3D" id="1.10.8.10">
    <property type="entry name" value="DNA helicase RuvA subunit, C-terminal domain"/>
    <property type="match status" value="1"/>
</dbReference>
<dbReference type="Gene3D" id="1.10.287.110">
    <property type="entry name" value="DnaJ domain"/>
    <property type="match status" value="1"/>
</dbReference>
<dbReference type="Gene3D" id="1.25.40.10">
    <property type="entry name" value="Tetratricopeptide repeat domain"/>
    <property type="match status" value="1"/>
</dbReference>
<dbReference type="InterPro" id="IPR036869">
    <property type="entry name" value="J_dom_sf"/>
</dbReference>
<dbReference type="InterPro" id="IPR015228">
    <property type="entry name" value="SWA2_UBA"/>
</dbReference>
<dbReference type="InterPro" id="IPR011990">
    <property type="entry name" value="TPR-like_helical_dom_sf"/>
</dbReference>
<dbReference type="InterPro" id="IPR019734">
    <property type="entry name" value="TPR_rpt"/>
</dbReference>
<dbReference type="InterPro" id="IPR009060">
    <property type="entry name" value="UBA-like_sf"/>
</dbReference>
<dbReference type="PANTHER" id="PTHR23172">
    <property type="entry name" value="AUXILIN/CYCLIN G-ASSOCIATED KINASE-RELATED"/>
    <property type="match status" value="1"/>
</dbReference>
<dbReference type="PANTHER" id="PTHR23172:SF19">
    <property type="entry name" value="J DOMAIN-CONTAINING PROTEIN"/>
    <property type="match status" value="1"/>
</dbReference>
<dbReference type="Pfam" id="PF09145">
    <property type="entry name" value="Ubiq-assoc"/>
    <property type="match status" value="1"/>
</dbReference>
<dbReference type="SMART" id="SM00028">
    <property type="entry name" value="TPR"/>
    <property type="match status" value="3"/>
</dbReference>
<dbReference type="SUPFAM" id="SSF46565">
    <property type="entry name" value="Chaperone J-domain"/>
    <property type="match status" value="1"/>
</dbReference>
<dbReference type="SUPFAM" id="SSF48452">
    <property type="entry name" value="TPR-like"/>
    <property type="match status" value="1"/>
</dbReference>
<dbReference type="SUPFAM" id="SSF46934">
    <property type="entry name" value="UBA-like"/>
    <property type="match status" value="1"/>
</dbReference>
<dbReference type="PROSITE" id="PS50293">
    <property type="entry name" value="TPR_REGION"/>
    <property type="match status" value="1"/>
</dbReference>
<accession>Q06677</accession>
<accession>D6VSV1</accession>
<comment type="function">
    <text evidence="2 3 4">Cofactor for the uncoating of clathrin-coated vesicles (CCVs) by Hsp70-type chaperones (SSA1/2/3 and SSB1/2). Coat disassembly is important for fusion of vesicles with target membranes and for recycling components of clathrin coats to the cytoplasm for further rounds of vesicle formation. Binds to assembled clathrin and recruits the ATP-activated chaperone to CCVs. Stimulates the ATPase activity of the clathrin-associated Hsp70-type chaperone SSA1, which then disrupts clathrin-clathrin interactions, leading to release of the clathrin coat. In addition, prevents unproductive clathrin assembly in the cell. Also required for cortical endoplasmic reticulum inheritance.</text>
</comment>
<comment type="subunit">
    <text evidence="2 6 7">Interacts with the clathrin light and heavy chains CLC1 and CHC1, respectively. Binds to clathrin with its N-terminal domain containing 3 clathrin-binding (CB) motifs. Association with clathrin is transient. Binds to polyubiquitin and ubiquitinated proteins.</text>
</comment>
<comment type="subcellular location">
    <subcellularLocation>
        <location evidence="2">Cytoplasm</location>
    </subcellularLocation>
    <subcellularLocation>
        <location evidence="2">Endoplasmic reticulum membrane</location>
        <topology evidence="2">Peripheral membrane protein</topology>
    </subcellularLocation>
</comment>
<comment type="domain">
    <text evidence="7">The TPR repeats and the J domain are required for interaction with Hsp70-type chaperones. The J domain is responsible for stimulating the ATPase activity of the chaperone.</text>
</comment>
<comment type="miscellaneous">
    <text evidence="5">Present with 768 molecules/cell in log phase SD medium.</text>
</comment>
<reference key="1">
    <citation type="journal article" date="1997" name="Nature">
        <title>The nucleotide sequence of Saccharomyces cerevisiae chromosome IV.</title>
        <authorList>
            <person name="Jacq C."/>
            <person name="Alt-Moerbe J."/>
            <person name="Andre B."/>
            <person name="Arnold W."/>
            <person name="Bahr A."/>
            <person name="Ballesta J.P.G."/>
            <person name="Bargues M."/>
            <person name="Baron L."/>
            <person name="Becker A."/>
            <person name="Biteau N."/>
            <person name="Bloecker H."/>
            <person name="Blugeon C."/>
            <person name="Boskovic J."/>
            <person name="Brandt P."/>
            <person name="Brueckner M."/>
            <person name="Buitrago M.J."/>
            <person name="Coster F."/>
            <person name="Delaveau T."/>
            <person name="del Rey F."/>
            <person name="Dujon B."/>
            <person name="Eide L.G."/>
            <person name="Garcia-Cantalejo J.M."/>
            <person name="Goffeau A."/>
            <person name="Gomez-Peris A."/>
            <person name="Granotier C."/>
            <person name="Hanemann V."/>
            <person name="Hankeln T."/>
            <person name="Hoheisel J.D."/>
            <person name="Jaeger W."/>
            <person name="Jimenez A."/>
            <person name="Jonniaux J.-L."/>
            <person name="Kraemer C."/>
            <person name="Kuester H."/>
            <person name="Laamanen P."/>
            <person name="Legros Y."/>
            <person name="Louis E.J."/>
            <person name="Moeller-Rieker S."/>
            <person name="Monnet A."/>
            <person name="Moro M."/>
            <person name="Mueller-Auer S."/>
            <person name="Nussbaumer B."/>
            <person name="Paricio N."/>
            <person name="Paulin L."/>
            <person name="Perea J."/>
            <person name="Perez-Alonso M."/>
            <person name="Perez-Ortin J.E."/>
            <person name="Pohl T.M."/>
            <person name="Prydz H."/>
            <person name="Purnelle B."/>
            <person name="Rasmussen S.W."/>
            <person name="Remacha M.A."/>
            <person name="Revuelta J.L."/>
            <person name="Rieger M."/>
            <person name="Salom D."/>
            <person name="Saluz H.P."/>
            <person name="Saiz J.E."/>
            <person name="Saren A.-M."/>
            <person name="Schaefer M."/>
            <person name="Scharfe M."/>
            <person name="Schmidt E.R."/>
            <person name="Schneider C."/>
            <person name="Scholler P."/>
            <person name="Schwarz S."/>
            <person name="Soler-Mira A."/>
            <person name="Urrestarazu L.A."/>
            <person name="Verhasselt P."/>
            <person name="Vissers S."/>
            <person name="Voet M."/>
            <person name="Volckaert G."/>
            <person name="Wagner G."/>
            <person name="Wambutt R."/>
            <person name="Wedler E."/>
            <person name="Wedler H."/>
            <person name="Woelfl S."/>
            <person name="Harris D.E."/>
            <person name="Bowman S."/>
            <person name="Brown D."/>
            <person name="Churcher C.M."/>
            <person name="Connor R."/>
            <person name="Dedman K."/>
            <person name="Gentles S."/>
            <person name="Hamlin N."/>
            <person name="Hunt S."/>
            <person name="Jones L."/>
            <person name="McDonald S."/>
            <person name="Murphy L.D."/>
            <person name="Niblett D."/>
            <person name="Odell C."/>
            <person name="Oliver K."/>
            <person name="Rajandream M.A."/>
            <person name="Richards C."/>
            <person name="Shore L."/>
            <person name="Walsh S.V."/>
            <person name="Barrell B.G."/>
            <person name="Dietrich F.S."/>
            <person name="Mulligan J.T."/>
            <person name="Allen E."/>
            <person name="Araujo R."/>
            <person name="Aviles E."/>
            <person name="Berno A."/>
            <person name="Carpenter J."/>
            <person name="Chen E."/>
            <person name="Cherry J.M."/>
            <person name="Chung E."/>
            <person name="Duncan M."/>
            <person name="Hunicke-Smith S."/>
            <person name="Hyman R.W."/>
            <person name="Komp C."/>
            <person name="Lashkari D."/>
            <person name="Lew H."/>
            <person name="Lin D."/>
            <person name="Mosedale D."/>
            <person name="Nakahara K."/>
            <person name="Namath A."/>
            <person name="Oefner P."/>
            <person name="Oh C."/>
            <person name="Petel F.X."/>
            <person name="Roberts D."/>
            <person name="Schramm S."/>
            <person name="Schroeder M."/>
            <person name="Shogren T."/>
            <person name="Shroff N."/>
            <person name="Winant A."/>
            <person name="Yelton M.A."/>
            <person name="Botstein D."/>
            <person name="Davis R.W."/>
            <person name="Johnston M."/>
            <person name="Andrews S."/>
            <person name="Brinkman R."/>
            <person name="Cooper J."/>
            <person name="Ding H."/>
            <person name="Du Z."/>
            <person name="Favello A."/>
            <person name="Fulton L."/>
            <person name="Gattung S."/>
            <person name="Greco T."/>
            <person name="Hallsworth K."/>
            <person name="Hawkins J."/>
            <person name="Hillier L.W."/>
            <person name="Jier M."/>
            <person name="Johnson D."/>
            <person name="Johnston L."/>
            <person name="Kirsten J."/>
            <person name="Kucaba T."/>
            <person name="Langston Y."/>
            <person name="Latreille P."/>
            <person name="Le T."/>
            <person name="Mardis E."/>
            <person name="Menezes S."/>
            <person name="Miller N."/>
            <person name="Nhan M."/>
            <person name="Pauley A."/>
            <person name="Peluso D."/>
            <person name="Rifkin L."/>
            <person name="Riles L."/>
            <person name="Taich A."/>
            <person name="Trevaskis E."/>
            <person name="Vignati D."/>
            <person name="Wilcox L."/>
            <person name="Wohldman P."/>
            <person name="Vaudin M."/>
            <person name="Wilson R."/>
            <person name="Waterston R."/>
            <person name="Albermann K."/>
            <person name="Hani J."/>
            <person name="Heumann K."/>
            <person name="Kleine K."/>
            <person name="Mewes H.-W."/>
            <person name="Zollner A."/>
            <person name="Zaccaria P."/>
        </authorList>
    </citation>
    <scope>NUCLEOTIDE SEQUENCE [LARGE SCALE GENOMIC DNA]</scope>
    <source>
        <strain>ATCC 204508 / S288c</strain>
    </source>
</reference>
<reference key="2">
    <citation type="journal article" date="2014" name="G3 (Bethesda)">
        <title>The reference genome sequence of Saccharomyces cerevisiae: Then and now.</title>
        <authorList>
            <person name="Engel S.R."/>
            <person name="Dietrich F.S."/>
            <person name="Fisk D.G."/>
            <person name="Binkley G."/>
            <person name="Balakrishnan R."/>
            <person name="Costanzo M.C."/>
            <person name="Dwight S.S."/>
            <person name="Hitz B.C."/>
            <person name="Karra K."/>
            <person name="Nash R.S."/>
            <person name="Weng S."/>
            <person name="Wong E.D."/>
            <person name="Lloyd P."/>
            <person name="Skrzypek M.S."/>
            <person name="Miyasato S.R."/>
            <person name="Simison M."/>
            <person name="Cherry J.M."/>
        </authorList>
    </citation>
    <scope>GENOME REANNOTATION</scope>
    <source>
        <strain>ATCC 204508 / S288c</strain>
    </source>
</reference>
<reference key="3">
    <citation type="journal article" date="2000" name="Curr. Biol.">
        <title>The auxilin-like phosphoprotein Swa2p is required for clathrin function in yeast.</title>
        <authorList>
            <person name="Gall W.E."/>
            <person name="Higginbotham M.A."/>
            <person name="Chen C.-Y."/>
            <person name="Ingram M.F."/>
            <person name="Cyr D.M."/>
            <person name="Graham T.R."/>
        </authorList>
    </citation>
    <scope>FUNCTION</scope>
    <scope>SUBCELLULAR LOCATION</scope>
    <scope>PHOSPHORYLATION</scope>
    <scope>MUTAGENESIS OF GLY-388</scope>
    <scope>INTERACTION WITH CLC1</scope>
</reference>
<reference key="4">
    <citation type="journal article" date="2000" name="Nat. Cell Biol.">
        <title>A yeast DNA J protein required for uncoating of clathrin-coated vesicles in vivo.</title>
        <authorList>
            <person name="Pishvaee B."/>
            <person name="Costaguta G."/>
            <person name="Yeung B.G."/>
            <person name="Ryazantsev S."/>
            <person name="Greener T."/>
            <person name="Greene L.E."/>
            <person name="Eisenberg E."/>
            <person name="McCaffery J.M."/>
            <person name="Payne G.S."/>
        </authorList>
    </citation>
    <scope>FUNCTION</scope>
</reference>
<reference key="5">
    <citation type="journal article" date="2001" name="Mol. Biol. Cell">
        <title>Aux1p/Swa2p is required for cortical endoplasmic reticulum inheritance in Saccharomyces cerevisiae.</title>
        <authorList>
            <person name="Du Y."/>
            <person name="Pypaert M."/>
            <person name="Novick P."/>
            <person name="Ferro-Novick S."/>
        </authorList>
    </citation>
    <scope>FUNCTION IN ENDOPLASMIC RETICULUM INHERITANCE</scope>
</reference>
<reference key="6">
    <citation type="journal article" date="2003" name="Nature">
        <title>Global analysis of protein expression in yeast.</title>
        <authorList>
            <person name="Ghaemmaghami S."/>
            <person name="Huh W.-K."/>
            <person name="Bower K."/>
            <person name="Howson R.W."/>
            <person name="Belle A."/>
            <person name="Dephoure N."/>
            <person name="O'Shea E.K."/>
            <person name="Weissman J.S."/>
        </authorList>
    </citation>
    <scope>LEVEL OF PROTEIN EXPRESSION [LARGE SCALE ANALYSIS]</scope>
</reference>
<reference key="7">
    <citation type="journal article" date="2007" name="J. Proteome Res.">
        <title>Large-scale phosphorylation analysis of alpha-factor-arrested Saccharomyces cerevisiae.</title>
        <authorList>
            <person name="Li X."/>
            <person name="Gerber S.A."/>
            <person name="Rudner A.D."/>
            <person name="Beausoleil S.A."/>
            <person name="Haas W."/>
            <person name="Villen J."/>
            <person name="Elias J.E."/>
            <person name="Gygi S.P."/>
        </authorList>
    </citation>
    <scope>PHOSPHORYLATION [LARGE SCALE ANALYSIS] AT SER-64; SER-264; SER-308 AND SER-312</scope>
    <scope>IDENTIFICATION BY MASS SPECTROMETRY [LARGE SCALE ANALYSIS]</scope>
    <source>
        <strain>ADR376</strain>
    </source>
</reference>
<reference key="8">
    <citation type="journal article" date="2008" name="Mol. Cell. Proteomics">
        <title>A multidimensional chromatography technology for in-depth phosphoproteome analysis.</title>
        <authorList>
            <person name="Albuquerque C.P."/>
            <person name="Smolka M.B."/>
            <person name="Payne S.H."/>
            <person name="Bafna V."/>
            <person name="Eng J."/>
            <person name="Zhou H."/>
        </authorList>
    </citation>
    <scope>PHOSPHORYLATION [LARGE SCALE ANALYSIS] AT SER-64 AND SER-264</scope>
    <scope>IDENTIFICATION BY MASS SPECTROMETRY [LARGE SCALE ANALYSIS]</scope>
</reference>
<reference key="9">
    <citation type="journal article" date="2009" name="Science">
        <title>Global analysis of Cdk1 substrate phosphorylation sites provides insights into evolution.</title>
        <authorList>
            <person name="Holt L.J."/>
            <person name="Tuch B.B."/>
            <person name="Villen J."/>
            <person name="Johnson A.D."/>
            <person name="Gygi S.P."/>
            <person name="Morgan D.O."/>
        </authorList>
    </citation>
    <scope>PHOSPHORYLATION [LARGE SCALE ANALYSIS] AT SER-52; SER-64 AND SER-264</scope>
    <scope>IDENTIFICATION BY MASS SPECTROMETRY [LARGE SCALE ANALYSIS]</scope>
</reference>
<reference key="10">
    <citation type="journal article" date="2004" name="Proteins">
        <title>Solution structure of the ubiquitin-binding domain in Swa2p from Saccharomyces cerevisiae.</title>
        <authorList>
            <person name="Chim N."/>
            <person name="Gall W.E."/>
            <person name="Xiao J."/>
            <person name="Harris M.P."/>
            <person name="Graham T.R."/>
            <person name="Krezel A.M."/>
        </authorList>
    </citation>
    <scope>STRUCTURE BY NMR OF 137-183</scope>
    <scope>INTERACTION WITH UBIQUITIN</scope>
</reference>
<reference key="11">
    <citation type="journal article" date="2006" name="Mol. Biol. Cell">
        <title>Dissection of Swa2p/auxilin domain requirements for cochaperoning Hsp70 clathrin-uncoating activity in vivo.</title>
        <authorList>
            <person name="Xiao J."/>
            <person name="Kim L.S."/>
            <person name="Graham T.R."/>
        </authorList>
    </citation>
    <scope>DOMAINS</scope>
    <scope>INTERACTION WITH CHC1</scope>
    <scope>MUTAGENESIS OF GLY-388 AND 631-HIS--ASP-633</scope>
</reference>
<proteinExistence type="evidence at protein level"/>
<evidence type="ECO:0000256" key="1">
    <source>
        <dbReference type="SAM" id="MobiDB-lite"/>
    </source>
</evidence>
<evidence type="ECO:0000269" key="2">
    <source>
    </source>
</evidence>
<evidence type="ECO:0000269" key="3">
    <source>
    </source>
</evidence>
<evidence type="ECO:0000269" key="4">
    <source>
    </source>
</evidence>
<evidence type="ECO:0000269" key="5">
    <source>
    </source>
</evidence>
<evidence type="ECO:0000269" key="6">
    <source>
    </source>
</evidence>
<evidence type="ECO:0000269" key="7">
    <source>
    </source>
</evidence>
<evidence type="ECO:0007744" key="8">
    <source>
    </source>
</evidence>
<evidence type="ECO:0007744" key="9">
    <source>
    </source>
</evidence>
<evidence type="ECO:0007744" key="10">
    <source>
    </source>
</evidence>
<evidence type="ECO:0007829" key="11">
    <source>
        <dbReference type="PDB" id="1PGY"/>
    </source>
</evidence>
<organism>
    <name type="scientific">Saccharomyces cerevisiae (strain ATCC 204508 / S288c)</name>
    <name type="common">Baker's yeast</name>
    <dbReference type="NCBI Taxonomy" id="559292"/>
    <lineage>
        <taxon>Eukaryota</taxon>
        <taxon>Fungi</taxon>
        <taxon>Dikarya</taxon>
        <taxon>Ascomycota</taxon>
        <taxon>Saccharomycotina</taxon>
        <taxon>Saccharomycetes</taxon>
        <taxon>Saccharomycetales</taxon>
        <taxon>Saccharomycetaceae</taxon>
        <taxon>Saccharomyces</taxon>
    </lineage>
</organism>
<protein>
    <recommendedName>
        <fullName>Auxilin-like clathrin uncoating factor SWA2</fullName>
    </recommendedName>
    <alternativeName>
        <fullName>Bud site selection protein 24</fullName>
    </alternativeName>
    <alternativeName>
        <fullName>DnaJ-related protein SWA2</fullName>
        <shortName>J protein SWA2</shortName>
    </alternativeName>
    <alternativeName>
        <fullName>Synthetic lethal with ARF1 protein 2</fullName>
    </alternativeName>
</protein>